<comment type="function">
    <text evidence="1">Catalyzes the deamination of dCTP to dUTP.</text>
</comment>
<comment type="catalytic activity">
    <reaction evidence="1">
        <text>dCTP + H2O + H(+) = dUTP + NH4(+)</text>
        <dbReference type="Rhea" id="RHEA:22680"/>
        <dbReference type="ChEBI" id="CHEBI:15377"/>
        <dbReference type="ChEBI" id="CHEBI:15378"/>
        <dbReference type="ChEBI" id="CHEBI:28938"/>
        <dbReference type="ChEBI" id="CHEBI:61481"/>
        <dbReference type="ChEBI" id="CHEBI:61555"/>
        <dbReference type="EC" id="3.5.4.13"/>
    </reaction>
</comment>
<comment type="pathway">
    <text evidence="1">Pyrimidine metabolism; dUMP biosynthesis; dUMP from dCTP (dUTP route): step 1/2.</text>
</comment>
<comment type="subunit">
    <text evidence="1">Homotrimer.</text>
</comment>
<comment type="similarity">
    <text evidence="1">Belongs to the dCTP deaminase family.</text>
</comment>
<gene>
    <name evidence="1" type="primary">dcd</name>
    <name type="ordered locus">BB0845</name>
</gene>
<name>DCD_BORBR</name>
<feature type="chain" id="PRO_0000155966" description="dCTP deaminase">
    <location>
        <begin position="1"/>
        <end position="187"/>
    </location>
</feature>
<feature type="active site" description="Proton donor/acceptor" evidence="1">
    <location>
        <position position="136"/>
    </location>
</feature>
<feature type="binding site" evidence="1">
    <location>
        <begin position="110"/>
        <end position="115"/>
    </location>
    <ligand>
        <name>dCTP</name>
        <dbReference type="ChEBI" id="CHEBI:61481"/>
    </ligand>
</feature>
<feature type="binding site" evidence="1">
    <location>
        <begin position="134"/>
        <end position="136"/>
    </location>
    <ligand>
        <name>dCTP</name>
        <dbReference type="ChEBI" id="CHEBI:61481"/>
    </ligand>
</feature>
<feature type="binding site" evidence="1">
    <location>
        <position position="155"/>
    </location>
    <ligand>
        <name>dCTP</name>
        <dbReference type="ChEBI" id="CHEBI:61481"/>
    </ligand>
</feature>
<feature type="binding site" evidence="1">
    <location>
        <position position="169"/>
    </location>
    <ligand>
        <name>dCTP</name>
        <dbReference type="ChEBI" id="CHEBI:61481"/>
    </ligand>
</feature>
<feature type="binding site" evidence="1">
    <location>
        <position position="179"/>
    </location>
    <ligand>
        <name>dCTP</name>
        <dbReference type="ChEBI" id="CHEBI:61481"/>
    </ligand>
</feature>
<evidence type="ECO:0000255" key="1">
    <source>
        <dbReference type="HAMAP-Rule" id="MF_00146"/>
    </source>
</evidence>
<dbReference type="EC" id="3.5.4.13" evidence="1"/>
<dbReference type="EMBL" id="BX640439">
    <property type="protein sequence ID" value="CAE31344.1"/>
    <property type="molecule type" value="Genomic_DNA"/>
</dbReference>
<dbReference type="RefSeq" id="WP_003808382.1">
    <property type="nucleotide sequence ID" value="NC_002927.3"/>
</dbReference>
<dbReference type="SMR" id="Q7WP40"/>
<dbReference type="GeneID" id="93202510"/>
<dbReference type="KEGG" id="bbr:BB0845"/>
<dbReference type="eggNOG" id="COG0717">
    <property type="taxonomic scope" value="Bacteria"/>
</dbReference>
<dbReference type="HOGENOM" id="CLU_087476_4_0_4"/>
<dbReference type="UniPathway" id="UPA00610">
    <property type="reaction ID" value="UER00665"/>
</dbReference>
<dbReference type="Proteomes" id="UP000001027">
    <property type="component" value="Chromosome"/>
</dbReference>
<dbReference type="GO" id="GO:0008829">
    <property type="term" value="F:dCTP deaminase activity"/>
    <property type="evidence" value="ECO:0007669"/>
    <property type="project" value="UniProtKB-UniRule"/>
</dbReference>
<dbReference type="GO" id="GO:0000166">
    <property type="term" value="F:nucleotide binding"/>
    <property type="evidence" value="ECO:0007669"/>
    <property type="project" value="UniProtKB-KW"/>
</dbReference>
<dbReference type="GO" id="GO:0006226">
    <property type="term" value="P:dUMP biosynthetic process"/>
    <property type="evidence" value="ECO:0007669"/>
    <property type="project" value="UniProtKB-UniPathway"/>
</dbReference>
<dbReference type="GO" id="GO:0006229">
    <property type="term" value="P:dUTP biosynthetic process"/>
    <property type="evidence" value="ECO:0007669"/>
    <property type="project" value="UniProtKB-UniRule"/>
</dbReference>
<dbReference type="GO" id="GO:0015949">
    <property type="term" value="P:nucleobase-containing small molecule interconversion"/>
    <property type="evidence" value="ECO:0007669"/>
    <property type="project" value="TreeGrafter"/>
</dbReference>
<dbReference type="CDD" id="cd07557">
    <property type="entry name" value="trimeric_dUTPase"/>
    <property type="match status" value="1"/>
</dbReference>
<dbReference type="FunFam" id="2.70.40.10:FF:000001">
    <property type="entry name" value="dCTP deaminase"/>
    <property type="match status" value="1"/>
</dbReference>
<dbReference type="Gene3D" id="2.70.40.10">
    <property type="match status" value="1"/>
</dbReference>
<dbReference type="HAMAP" id="MF_00146">
    <property type="entry name" value="dCTP_deaminase"/>
    <property type="match status" value="1"/>
</dbReference>
<dbReference type="InterPro" id="IPR011962">
    <property type="entry name" value="dCTP_deaminase"/>
</dbReference>
<dbReference type="InterPro" id="IPR036157">
    <property type="entry name" value="dUTPase-like_sf"/>
</dbReference>
<dbReference type="InterPro" id="IPR033704">
    <property type="entry name" value="dUTPase_trimeric"/>
</dbReference>
<dbReference type="NCBIfam" id="TIGR02274">
    <property type="entry name" value="dCTP_deam"/>
    <property type="match status" value="1"/>
</dbReference>
<dbReference type="PANTHER" id="PTHR42680">
    <property type="entry name" value="DCTP DEAMINASE"/>
    <property type="match status" value="1"/>
</dbReference>
<dbReference type="PANTHER" id="PTHR42680:SF3">
    <property type="entry name" value="DCTP DEAMINASE"/>
    <property type="match status" value="1"/>
</dbReference>
<dbReference type="Pfam" id="PF22769">
    <property type="entry name" value="DCD"/>
    <property type="match status" value="1"/>
</dbReference>
<dbReference type="SUPFAM" id="SSF51283">
    <property type="entry name" value="dUTPase-like"/>
    <property type="match status" value="1"/>
</dbReference>
<accession>Q7WP40</accession>
<organism>
    <name type="scientific">Bordetella bronchiseptica (strain ATCC BAA-588 / NCTC 13252 / RB50)</name>
    <name type="common">Alcaligenes bronchisepticus</name>
    <dbReference type="NCBI Taxonomy" id="257310"/>
    <lineage>
        <taxon>Bacteria</taxon>
        <taxon>Pseudomonadati</taxon>
        <taxon>Pseudomonadota</taxon>
        <taxon>Betaproteobacteria</taxon>
        <taxon>Burkholderiales</taxon>
        <taxon>Alcaligenaceae</taxon>
        <taxon>Bordetella</taxon>
    </lineage>
</organism>
<sequence length="187" mass="20900">MSIKSDRWIRRAAEAGMIEPFEPGQVRTAGGNRIVSYGTSSYGYDVRCADEFKIFTNINSTIVDPKQFDEKSFVDFKGDVCIIPPNSFALARTVEYFRIPRSVLTICLGKSTYARCGIIVNVTPLEPEWEGHVTLEFSNTTPLPAKIYAGEGCAQMLFLESDEVCETSYRDRGGKYQGQRGVTLPRT</sequence>
<proteinExistence type="inferred from homology"/>
<reference key="1">
    <citation type="journal article" date="2003" name="Nat. Genet.">
        <title>Comparative analysis of the genome sequences of Bordetella pertussis, Bordetella parapertussis and Bordetella bronchiseptica.</title>
        <authorList>
            <person name="Parkhill J."/>
            <person name="Sebaihia M."/>
            <person name="Preston A."/>
            <person name="Murphy L.D."/>
            <person name="Thomson N.R."/>
            <person name="Harris D.E."/>
            <person name="Holden M.T.G."/>
            <person name="Churcher C.M."/>
            <person name="Bentley S.D."/>
            <person name="Mungall K.L."/>
            <person name="Cerdeno-Tarraga A.-M."/>
            <person name="Temple L."/>
            <person name="James K.D."/>
            <person name="Harris B."/>
            <person name="Quail M.A."/>
            <person name="Achtman M."/>
            <person name="Atkin R."/>
            <person name="Baker S."/>
            <person name="Basham D."/>
            <person name="Bason N."/>
            <person name="Cherevach I."/>
            <person name="Chillingworth T."/>
            <person name="Collins M."/>
            <person name="Cronin A."/>
            <person name="Davis P."/>
            <person name="Doggett J."/>
            <person name="Feltwell T."/>
            <person name="Goble A."/>
            <person name="Hamlin N."/>
            <person name="Hauser H."/>
            <person name="Holroyd S."/>
            <person name="Jagels K."/>
            <person name="Leather S."/>
            <person name="Moule S."/>
            <person name="Norberczak H."/>
            <person name="O'Neil S."/>
            <person name="Ormond D."/>
            <person name="Price C."/>
            <person name="Rabbinowitsch E."/>
            <person name="Rutter S."/>
            <person name="Sanders M."/>
            <person name="Saunders D."/>
            <person name="Seeger K."/>
            <person name="Sharp S."/>
            <person name="Simmonds M."/>
            <person name="Skelton J."/>
            <person name="Squares R."/>
            <person name="Squares S."/>
            <person name="Stevens K."/>
            <person name="Unwin L."/>
            <person name="Whitehead S."/>
            <person name="Barrell B.G."/>
            <person name="Maskell D.J."/>
        </authorList>
    </citation>
    <scope>NUCLEOTIDE SEQUENCE [LARGE SCALE GENOMIC DNA]</scope>
    <source>
        <strain>ATCC BAA-588 / NCTC 13252 / RB50</strain>
    </source>
</reference>
<protein>
    <recommendedName>
        <fullName evidence="1">dCTP deaminase</fullName>
        <ecNumber evidence="1">3.5.4.13</ecNumber>
    </recommendedName>
    <alternativeName>
        <fullName evidence="1">Deoxycytidine triphosphate deaminase</fullName>
    </alternativeName>
</protein>
<keyword id="KW-0378">Hydrolase</keyword>
<keyword id="KW-0546">Nucleotide metabolism</keyword>
<keyword id="KW-0547">Nucleotide-binding</keyword>